<evidence type="ECO:0000250" key="1">
    <source>
        <dbReference type="UniProtKB" id="Q8L9T7"/>
    </source>
</evidence>
<evidence type="ECO:0000255" key="2">
    <source>
        <dbReference type="PROSITE-ProRule" id="PRU00110"/>
    </source>
</evidence>
<evidence type="ECO:0000269" key="3">
    <source>
    </source>
</evidence>
<evidence type="ECO:0000303" key="4">
    <source>
    </source>
</evidence>
<evidence type="ECO:0000303" key="5">
    <source>
    </source>
</evidence>
<evidence type="ECO:0000305" key="6"/>
<evidence type="ECO:0000312" key="7">
    <source>
        <dbReference type="EMBL" id="BAD87514.1"/>
    </source>
</evidence>
<evidence type="ECO:0000312" key="8">
    <source>
        <dbReference type="EMBL" id="BAD87913.1"/>
    </source>
</evidence>
<evidence type="ECO:0000312" key="9">
    <source>
        <dbReference type="EMBL" id="BAF06135.2"/>
    </source>
</evidence>
<dbReference type="EMBL" id="AP003376">
    <property type="protein sequence ID" value="BAD87514.1"/>
    <property type="status" value="ALT_SEQ"/>
    <property type="molecule type" value="Genomic_DNA"/>
</dbReference>
<dbReference type="EMBL" id="AP003768">
    <property type="protein sequence ID" value="BAD87913.1"/>
    <property type="status" value="ALT_SEQ"/>
    <property type="molecule type" value="Genomic_DNA"/>
</dbReference>
<dbReference type="EMBL" id="AP008207">
    <property type="protein sequence ID" value="BAF06135.2"/>
    <property type="molecule type" value="Genomic_DNA"/>
</dbReference>
<dbReference type="EMBL" id="AP014957">
    <property type="status" value="NOT_ANNOTATED_CDS"/>
    <property type="molecule type" value="Genomic_DNA"/>
</dbReference>
<dbReference type="SMR" id="Q0JJE3"/>
<dbReference type="FunCoup" id="Q0JJE3">
    <property type="interactions" value="14"/>
</dbReference>
<dbReference type="STRING" id="39947.Q0JJE3"/>
<dbReference type="PaxDb" id="39947-Q0JJE3"/>
<dbReference type="KEGG" id="dosa:Os01g0743800"/>
<dbReference type="eggNOG" id="KOG4747">
    <property type="taxonomic scope" value="Eukaryota"/>
</dbReference>
<dbReference type="InParanoid" id="Q0JJE3"/>
<dbReference type="Proteomes" id="UP000000763">
    <property type="component" value="Chromosome 1"/>
</dbReference>
<dbReference type="Proteomes" id="UP000059680">
    <property type="component" value="Chromosome 1"/>
</dbReference>
<dbReference type="GO" id="GO:0005737">
    <property type="term" value="C:cytoplasm"/>
    <property type="evidence" value="ECO:0000318"/>
    <property type="project" value="GO_Central"/>
</dbReference>
<dbReference type="GO" id="GO:0005634">
    <property type="term" value="C:nucleus"/>
    <property type="evidence" value="ECO:0000318"/>
    <property type="project" value="GO_Central"/>
</dbReference>
<dbReference type="GO" id="GO:0009927">
    <property type="term" value="F:histidine phosphotransfer kinase activity"/>
    <property type="evidence" value="ECO:0000318"/>
    <property type="project" value="GO_Central"/>
</dbReference>
<dbReference type="GO" id="GO:0043424">
    <property type="term" value="F:protein histidine kinase binding"/>
    <property type="evidence" value="ECO:0000318"/>
    <property type="project" value="GO_Central"/>
</dbReference>
<dbReference type="GO" id="GO:0009736">
    <property type="term" value="P:cytokinin-activated signaling pathway"/>
    <property type="evidence" value="ECO:0000318"/>
    <property type="project" value="GO_Central"/>
</dbReference>
<dbReference type="GO" id="GO:0000160">
    <property type="term" value="P:phosphorelay signal transduction system"/>
    <property type="evidence" value="ECO:0000318"/>
    <property type="project" value="GO_Central"/>
</dbReference>
<dbReference type="FunFam" id="1.20.120.160:FF:000005">
    <property type="entry name" value="Histidine-containing phosphotransfer protein 4"/>
    <property type="match status" value="1"/>
</dbReference>
<dbReference type="Gene3D" id="1.20.120.160">
    <property type="entry name" value="HPT domain"/>
    <property type="match status" value="1"/>
</dbReference>
<dbReference type="InterPro" id="IPR045871">
    <property type="entry name" value="AHP1-5/YPD1"/>
</dbReference>
<dbReference type="InterPro" id="IPR036641">
    <property type="entry name" value="HPT_dom_sf"/>
</dbReference>
<dbReference type="InterPro" id="IPR008207">
    <property type="entry name" value="Sig_transdc_His_kin_Hpt_dom"/>
</dbReference>
<dbReference type="PANTHER" id="PTHR28242">
    <property type="entry name" value="PHOSPHORELAY INTERMEDIATE PROTEIN YPD1"/>
    <property type="match status" value="1"/>
</dbReference>
<dbReference type="PANTHER" id="PTHR28242:SF61">
    <property type="entry name" value="PSEUDO HISTIDINE-CONTAINING PHOSPHOTRANSFER PROTEIN 1"/>
    <property type="match status" value="1"/>
</dbReference>
<dbReference type="Pfam" id="PF01627">
    <property type="entry name" value="Hpt"/>
    <property type="match status" value="1"/>
</dbReference>
<dbReference type="SUPFAM" id="SSF47226">
    <property type="entry name" value="Histidine-containing phosphotransfer domain, HPT domain"/>
    <property type="match status" value="1"/>
</dbReference>
<protein>
    <recommendedName>
        <fullName evidence="5">Pseudo histidine-containing phosphotransfer protein 1</fullName>
    </recommendedName>
    <alternativeName>
        <fullName evidence="4">OsHpt1</fullName>
    </alternativeName>
</protein>
<reference key="1">
    <citation type="journal article" date="2002" name="Nature">
        <title>The genome sequence and structure of rice chromosome 1.</title>
        <authorList>
            <person name="Sasaki T."/>
            <person name="Matsumoto T."/>
            <person name="Yamamoto K."/>
            <person name="Sakata K."/>
            <person name="Baba T."/>
            <person name="Katayose Y."/>
            <person name="Wu J."/>
            <person name="Niimura Y."/>
            <person name="Cheng Z."/>
            <person name="Nagamura Y."/>
            <person name="Antonio B.A."/>
            <person name="Kanamori H."/>
            <person name="Hosokawa S."/>
            <person name="Masukawa M."/>
            <person name="Arikawa K."/>
            <person name="Chiden Y."/>
            <person name="Hayashi M."/>
            <person name="Okamoto M."/>
            <person name="Ando T."/>
            <person name="Aoki H."/>
            <person name="Arita K."/>
            <person name="Hamada M."/>
            <person name="Harada C."/>
            <person name="Hijishita S."/>
            <person name="Honda M."/>
            <person name="Ichikawa Y."/>
            <person name="Idonuma A."/>
            <person name="Iijima M."/>
            <person name="Ikeda M."/>
            <person name="Ikeno M."/>
            <person name="Ito S."/>
            <person name="Ito T."/>
            <person name="Ito Y."/>
            <person name="Ito Y."/>
            <person name="Iwabuchi A."/>
            <person name="Kamiya K."/>
            <person name="Karasawa W."/>
            <person name="Katagiri S."/>
            <person name="Kikuta A."/>
            <person name="Kobayashi N."/>
            <person name="Kono I."/>
            <person name="Machita K."/>
            <person name="Maehara T."/>
            <person name="Mizuno H."/>
            <person name="Mizubayashi T."/>
            <person name="Mukai Y."/>
            <person name="Nagasaki H."/>
            <person name="Nakashima M."/>
            <person name="Nakama Y."/>
            <person name="Nakamichi Y."/>
            <person name="Nakamura M."/>
            <person name="Namiki N."/>
            <person name="Negishi M."/>
            <person name="Ohta I."/>
            <person name="Ono N."/>
            <person name="Saji S."/>
            <person name="Sakai K."/>
            <person name="Shibata M."/>
            <person name="Shimokawa T."/>
            <person name="Shomura A."/>
            <person name="Song J."/>
            <person name="Takazaki Y."/>
            <person name="Terasawa K."/>
            <person name="Tsuji K."/>
            <person name="Waki K."/>
            <person name="Yamagata H."/>
            <person name="Yamane H."/>
            <person name="Yoshiki S."/>
            <person name="Yoshihara R."/>
            <person name="Yukawa K."/>
            <person name="Zhong H."/>
            <person name="Iwama H."/>
            <person name="Endo T."/>
            <person name="Ito H."/>
            <person name="Hahn J.H."/>
            <person name="Kim H.-I."/>
            <person name="Eun M.-Y."/>
            <person name="Yano M."/>
            <person name="Jiang J."/>
            <person name="Gojobori T."/>
        </authorList>
    </citation>
    <scope>NUCLEOTIDE SEQUENCE [LARGE SCALE GENOMIC DNA]</scope>
    <source>
        <strain>cv. Nipponbare</strain>
    </source>
</reference>
<reference key="2">
    <citation type="journal article" date="2005" name="Nature">
        <title>The map-based sequence of the rice genome.</title>
        <authorList>
            <consortium name="International rice genome sequencing project (IRGSP)"/>
        </authorList>
    </citation>
    <scope>NUCLEOTIDE SEQUENCE [LARGE SCALE GENOMIC DNA]</scope>
    <source>
        <strain>cv. Nipponbare</strain>
    </source>
</reference>
<reference key="3">
    <citation type="journal article" date="2008" name="Nucleic Acids Res.">
        <title>The rice annotation project database (RAP-DB): 2008 update.</title>
        <authorList>
            <consortium name="The rice annotation project (RAP)"/>
        </authorList>
    </citation>
    <scope>GENOME REANNOTATION</scope>
    <source>
        <strain>cv. Nipponbare</strain>
    </source>
</reference>
<reference key="4">
    <citation type="journal article" date="2013" name="Rice">
        <title>Improvement of the Oryza sativa Nipponbare reference genome using next generation sequence and optical map data.</title>
        <authorList>
            <person name="Kawahara Y."/>
            <person name="de la Bastide M."/>
            <person name="Hamilton J.P."/>
            <person name="Kanamori H."/>
            <person name="McCombie W.R."/>
            <person name="Ouyang S."/>
            <person name="Schwartz D.C."/>
            <person name="Tanaka T."/>
            <person name="Wu J."/>
            <person name="Zhou S."/>
            <person name="Childs K.L."/>
            <person name="Davidson R.M."/>
            <person name="Lin H."/>
            <person name="Quesada-Ocampo L."/>
            <person name="Vaillancourt B."/>
            <person name="Sakai H."/>
            <person name="Lee S.S."/>
            <person name="Kim J."/>
            <person name="Numa H."/>
            <person name="Itoh T."/>
            <person name="Buell C.R."/>
            <person name="Matsumoto T."/>
        </authorList>
    </citation>
    <scope>GENOME REANNOTATION</scope>
    <source>
        <strain>cv. Nipponbare</strain>
    </source>
</reference>
<reference key="5">
    <citation type="journal article" date="2006" name="Plant Physiol.">
        <title>Whole-genome analysis of Oryza sativa reveals similar architecture of two-component signaling machinery with Arabidopsis.</title>
        <authorList>
            <person name="Pareek A."/>
            <person name="Singh A."/>
            <person name="Kumar M."/>
            <person name="Kushwaha H.R."/>
            <person name="Lynn A.M."/>
            <person name="Singla-Pareek S.L."/>
        </authorList>
    </citation>
    <scope>DISRUPTION PHENOTYPE</scope>
</reference>
<reference key="6">
    <citation type="journal article" date="2007" name="Plant Physiol.">
        <title>Nomenclature for two-component signaling elements of rice.</title>
        <authorList>
            <person name="Schaller G.E."/>
            <person name="Doi K."/>
            <person name="Hwang I."/>
            <person name="Kieber J.J."/>
            <person name="Khurana J.P."/>
            <person name="Kurata N."/>
            <person name="Mizuno T."/>
            <person name="Pareek A."/>
            <person name="Shiu S.H."/>
            <person name="Wu P."/>
            <person name="Yip W.K."/>
        </authorList>
    </citation>
    <scope>GENE FAMILY</scope>
    <scope>NOMENCLATURE</scope>
</reference>
<gene>
    <name evidence="5" type="primary">PHP1</name>
    <name evidence="9" type="ordered locus">Os01g0743800</name>
    <name evidence="6" type="ordered locus">LOC_Os01g54050</name>
    <name evidence="7" type="ORF">OSJNBa0014K08.3</name>
    <name evidence="8" type="ORF">P0439E07.36</name>
</gene>
<accession>Q0JJE3</accession>
<accession>Q5JKW3</accession>
<feature type="chain" id="PRO_0000433813" description="Pseudo histidine-containing phosphotransfer protein 1">
    <location>
        <begin position="1"/>
        <end position="187"/>
    </location>
</feature>
<feature type="domain" description="HPt" evidence="2">
    <location>
        <begin position="74"/>
        <end position="169"/>
    </location>
</feature>
<sequence length="187" mass="21625">MDRYAFLSFYKCTHQVGKFVGSDTWSNVLRESWFFNNWKELLVPVSLSTFLLLGLKGYLDEQFCQVEDLQDEASPNFVEEVVTLFFKDSGRLMSNIEQALEKYPRDFNRWDTYMQQLKGSCSSIGASRMKNECMSFRDSCGQGNVEGCMRSFQKVKREHAVLRQKLESYFQLLRQAGPAGAATRPVM</sequence>
<name>PHP1_ORYSJ</name>
<organism>
    <name type="scientific">Oryza sativa subsp. japonica</name>
    <name type="common">Rice</name>
    <dbReference type="NCBI Taxonomy" id="39947"/>
    <lineage>
        <taxon>Eukaryota</taxon>
        <taxon>Viridiplantae</taxon>
        <taxon>Streptophyta</taxon>
        <taxon>Embryophyta</taxon>
        <taxon>Tracheophyta</taxon>
        <taxon>Spermatophyta</taxon>
        <taxon>Magnoliopsida</taxon>
        <taxon>Liliopsida</taxon>
        <taxon>Poales</taxon>
        <taxon>Poaceae</taxon>
        <taxon>BOP clade</taxon>
        <taxon>Oryzoideae</taxon>
        <taxon>Oryzeae</taxon>
        <taxon>Oryzinae</taxon>
        <taxon>Oryza</taxon>
        <taxon>Oryza sativa</taxon>
    </lineage>
</organism>
<keyword id="KW-0932">Cytokinin signaling pathway</keyword>
<keyword id="KW-1185">Reference proteome</keyword>
<keyword id="KW-0902">Two-component regulatory system</keyword>
<comment type="function">
    <text evidence="1">Functions as a two-component phosphorelay mediator between cytokinin sensor histidine kinases and response regulators (B-type ARRs). Plays an important role in propagating cytokinin signal transduction.</text>
</comment>
<comment type="disruption phenotype">
    <text evidence="3">Dwarf, narrow leaf and small grain phenotypes.</text>
</comment>
<comment type="caution">
    <text evidence="6">Lacks the conserved active histidine at position 115 that mediates the phosphotransfer. Shows a conserved HPt domain that may have some alternative degenerated phosphorelay role in cell signaling.</text>
</comment>
<comment type="sequence caution" evidence="6">
    <conflict type="erroneous gene model prediction">
        <sequence resource="EMBL-CDS" id="BAD87514"/>
    </conflict>
</comment>
<comment type="sequence caution" evidence="6">
    <conflict type="erroneous gene model prediction">
        <sequence resource="EMBL-CDS" id="BAD87913"/>
    </conflict>
</comment>
<proteinExistence type="inferred from homology"/>